<proteinExistence type="inferred from homology"/>
<keyword id="KW-0012">Acyltransferase</keyword>
<keyword id="KW-0963">Cytoplasm</keyword>
<keyword id="KW-0408">Iron</keyword>
<keyword id="KW-0479">Metal-binding</keyword>
<keyword id="KW-0808">Transferase</keyword>
<keyword id="KW-0819">tRNA processing</keyword>
<name>TSAD_PSEE4</name>
<reference key="1">
    <citation type="journal article" date="2006" name="Nat. Biotechnol.">
        <title>Complete genome sequence of the entomopathogenic and metabolically versatile soil bacterium Pseudomonas entomophila.</title>
        <authorList>
            <person name="Vodovar N."/>
            <person name="Vallenet D."/>
            <person name="Cruveiller S."/>
            <person name="Rouy Z."/>
            <person name="Barbe V."/>
            <person name="Acosta C."/>
            <person name="Cattolico L."/>
            <person name="Jubin C."/>
            <person name="Lajus A."/>
            <person name="Segurens B."/>
            <person name="Vacherie B."/>
            <person name="Wincker P."/>
            <person name="Weissenbach J."/>
            <person name="Lemaitre B."/>
            <person name="Medigue C."/>
            <person name="Boccard F."/>
        </authorList>
    </citation>
    <scope>NUCLEOTIDE SEQUENCE [LARGE SCALE GENOMIC DNA]</scope>
    <source>
        <strain>L48</strain>
    </source>
</reference>
<comment type="function">
    <text evidence="1">Required for the formation of a threonylcarbamoyl group on adenosine at position 37 (t(6)A37) in tRNAs that read codons beginning with adenine. Is involved in the transfer of the threonylcarbamoyl moiety of threonylcarbamoyl-AMP (TC-AMP) to the N6 group of A37, together with TsaE and TsaB. TsaD likely plays a direct catalytic role in this reaction.</text>
</comment>
<comment type="catalytic activity">
    <reaction evidence="1">
        <text>L-threonylcarbamoyladenylate + adenosine(37) in tRNA = N(6)-L-threonylcarbamoyladenosine(37) in tRNA + AMP + H(+)</text>
        <dbReference type="Rhea" id="RHEA:37059"/>
        <dbReference type="Rhea" id="RHEA-COMP:10162"/>
        <dbReference type="Rhea" id="RHEA-COMP:10163"/>
        <dbReference type="ChEBI" id="CHEBI:15378"/>
        <dbReference type="ChEBI" id="CHEBI:73682"/>
        <dbReference type="ChEBI" id="CHEBI:74411"/>
        <dbReference type="ChEBI" id="CHEBI:74418"/>
        <dbReference type="ChEBI" id="CHEBI:456215"/>
        <dbReference type="EC" id="2.3.1.234"/>
    </reaction>
</comment>
<comment type="cofactor">
    <cofactor evidence="1">
        <name>Fe(2+)</name>
        <dbReference type="ChEBI" id="CHEBI:29033"/>
    </cofactor>
    <text evidence="1">Binds 1 Fe(2+) ion per subunit.</text>
</comment>
<comment type="subcellular location">
    <subcellularLocation>
        <location evidence="1">Cytoplasm</location>
    </subcellularLocation>
</comment>
<comment type="similarity">
    <text evidence="1">Belongs to the KAE1 / TsaD family.</text>
</comment>
<feature type="chain" id="PRO_0000303492" description="tRNA N6-adenosine threonylcarbamoyltransferase">
    <location>
        <begin position="1"/>
        <end position="341"/>
    </location>
</feature>
<feature type="binding site" evidence="1">
    <location>
        <position position="111"/>
    </location>
    <ligand>
        <name>Fe cation</name>
        <dbReference type="ChEBI" id="CHEBI:24875"/>
    </ligand>
</feature>
<feature type="binding site" evidence="1">
    <location>
        <position position="115"/>
    </location>
    <ligand>
        <name>Fe cation</name>
        <dbReference type="ChEBI" id="CHEBI:24875"/>
    </ligand>
</feature>
<feature type="binding site" evidence="1">
    <location>
        <begin position="134"/>
        <end position="138"/>
    </location>
    <ligand>
        <name>substrate</name>
    </ligand>
</feature>
<feature type="binding site" evidence="1">
    <location>
        <position position="167"/>
    </location>
    <ligand>
        <name>substrate</name>
    </ligand>
</feature>
<feature type="binding site" evidence="1">
    <location>
        <position position="180"/>
    </location>
    <ligand>
        <name>substrate</name>
    </ligand>
</feature>
<feature type="binding site" evidence="1">
    <location>
        <position position="276"/>
    </location>
    <ligand>
        <name>substrate</name>
    </ligand>
</feature>
<feature type="binding site" evidence="1">
    <location>
        <position position="304"/>
    </location>
    <ligand>
        <name>Fe cation</name>
        <dbReference type="ChEBI" id="CHEBI:24875"/>
    </ligand>
</feature>
<gene>
    <name evidence="1" type="primary">tsaD</name>
    <name type="synonym">gcp</name>
    <name type="ordered locus">PSEEN0417</name>
</gene>
<sequence>MLVLGLETSCDETGVALYDSERGLLADALFSQIDLHRVYGGVVPELASRDHVKRMLPLIRQVLQEAGCVATEIDAIAYTAGPGLVGALLVGASCAQALAFAWDIPAIGVHHMEGHLLAPMLEEQPPEFPFVALLVSGGHTQLVRVDGIGQYELLGESLDDAAGEAFDKTAKLIGLNYPGGPEIARLAEQGTPGRFVFPRPMTDRPGLQFSFSGLKTFALNTWQQCRDAGDDNEQTRCDVSLAFQQAVVETLTIKCKRALKQTGLKRLVIAGGVSANKALRASLEDMLASIKGNVYYARPRFCTDNGAMIAYAGCQRLLAGQQQDLAISVQARWPMEQLPPV</sequence>
<protein>
    <recommendedName>
        <fullName evidence="1">tRNA N6-adenosine threonylcarbamoyltransferase</fullName>
        <ecNumber evidence="1">2.3.1.234</ecNumber>
    </recommendedName>
    <alternativeName>
        <fullName evidence="1">N6-L-threonylcarbamoyladenine synthase</fullName>
        <shortName evidence="1">t(6)A synthase</shortName>
    </alternativeName>
    <alternativeName>
        <fullName evidence="1">t(6)A37 threonylcarbamoyladenosine biosynthesis protein TsaD</fullName>
    </alternativeName>
    <alternativeName>
        <fullName evidence="1">tRNA threonylcarbamoyladenosine biosynthesis protein TsaD</fullName>
    </alternativeName>
</protein>
<organism>
    <name type="scientific">Pseudomonas entomophila (strain L48)</name>
    <dbReference type="NCBI Taxonomy" id="384676"/>
    <lineage>
        <taxon>Bacteria</taxon>
        <taxon>Pseudomonadati</taxon>
        <taxon>Pseudomonadota</taxon>
        <taxon>Gammaproteobacteria</taxon>
        <taxon>Pseudomonadales</taxon>
        <taxon>Pseudomonadaceae</taxon>
        <taxon>Pseudomonas</taxon>
    </lineage>
</organism>
<evidence type="ECO:0000255" key="1">
    <source>
        <dbReference type="HAMAP-Rule" id="MF_01445"/>
    </source>
</evidence>
<accession>Q1IG31</accession>
<dbReference type="EC" id="2.3.1.234" evidence="1"/>
<dbReference type="EMBL" id="CT573326">
    <property type="protein sequence ID" value="CAK13371.1"/>
    <property type="molecule type" value="Genomic_DNA"/>
</dbReference>
<dbReference type="RefSeq" id="WP_011531828.1">
    <property type="nucleotide sequence ID" value="NC_008027.1"/>
</dbReference>
<dbReference type="SMR" id="Q1IG31"/>
<dbReference type="STRING" id="384676.PSEEN0417"/>
<dbReference type="GeneID" id="32803752"/>
<dbReference type="KEGG" id="pen:PSEEN0417"/>
<dbReference type="eggNOG" id="COG0533">
    <property type="taxonomic scope" value="Bacteria"/>
</dbReference>
<dbReference type="HOGENOM" id="CLU_023208_0_0_6"/>
<dbReference type="OrthoDB" id="9806197at2"/>
<dbReference type="Proteomes" id="UP000000658">
    <property type="component" value="Chromosome"/>
</dbReference>
<dbReference type="GO" id="GO:0005737">
    <property type="term" value="C:cytoplasm"/>
    <property type="evidence" value="ECO:0007669"/>
    <property type="project" value="UniProtKB-SubCell"/>
</dbReference>
<dbReference type="GO" id="GO:0005506">
    <property type="term" value="F:iron ion binding"/>
    <property type="evidence" value="ECO:0007669"/>
    <property type="project" value="UniProtKB-UniRule"/>
</dbReference>
<dbReference type="GO" id="GO:0061711">
    <property type="term" value="F:N(6)-L-threonylcarbamoyladenine synthase activity"/>
    <property type="evidence" value="ECO:0007669"/>
    <property type="project" value="UniProtKB-EC"/>
</dbReference>
<dbReference type="GO" id="GO:0002949">
    <property type="term" value="P:tRNA threonylcarbamoyladenosine modification"/>
    <property type="evidence" value="ECO:0007669"/>
    <property type="project" value="UniProtKB-UniRule"/>
</dbReference>
<dbReference type="CDD" id="cd24133">
    <property type="entry name" value="ASKHA_NBD_TsaD_bac"/>
    <property type="match status" value="1"/>
</dbReference>
<dbReference type="FunFam" id="3.30.420.40:FF:000012">
    <property type="entry name" value="tRNA N6-adenosine threonylcarbamoyltransferase"/>
    <property type="match status" value="1"/>
</dbReference>
<dbReference type="FunFam" id="3.30.420.40:FF:000031">
    <property type="entry name" value="tRNA N6-adenosine threonylcarbamoyltransferase"/>
    <property type="match status" value="1"/>
</dbReference>
<dbReference type="Gene3D" id="3.30.420.40">
    <property type="match status" value="2"/>
</dbReference>
<dbReference type="HAMAP" id="MF_01445">
    <property type="entry name" value="TsaD"/>
    <property type="match status" value="1"/>
</dbReference>
<dbReference type="InterPro" id="IPR043129">
    <property type="entry name" value="ATPase_NBD"/>
</dbReference>
<dbReference type="InterPro" id="IPR000905">
    <property type="entry name" value="Gcp-like_dom"/>
</dbReference>
<dbReference type="InterPro" id="IPR017861">
    <property type="entry name" value="KAE1/TsaD"/>
</dbReference>
<dbReference type="InterPro" id="IPR022450">
    <property type="entry name" value="TsaD"/>
</dbReference>
<dbReference type="NCBIfam" id="TIGR00329">
    <property type="entry name" value="gcp_kae1"/>
    <property type="match status" value="1"/>
</dbReference>
<dbReference type="NCBIfam" id="TIGR03723">
    <property type="entry name" value="T6A_TsaD_YgjD"/>
    <property type="match status" value="1"/>
</dbReference>
<dbReference type="PANTHER" id="PTHR11735">
    <property type="entry name" value="TRNA N6-ADENOSINE THREONYLCARBAMOYLTRANSFERASE"/>
    <property type="match status" value="1"/>
</dbReference>
<dbReference type="PANTHER" id="PTHR11735:SF6">
    <property type="entry name" value="TRNA N6-ADENOSINE THREONYLCARBAMOYLTRANSFERASE, MITOCHONDRIAL"/>
    <property type="match status" value="1"/>
</dbReference>
<dbReference type="Pfam" id="PF00814">
    <property type="entry name" value="TsaD"/>
    <property type="match status" value="1"/>
</dbReference>
<dbReference type="PRINTS" id="PR00789">
    <property type="entry name" value="OSIALOPTASE"/>
</dbReference>
<dbReference type="SUPFAM" id="SSF53067">
    <property type="entry name" value="Actin-like ATPase domain"/>
    <property type="match status" value="2"/>
</dbReference>